<comment type="function">
    <text evidence="1">Part of a stress-induced multi-chaperone system, it is involved in the recovery of the cell from heat-induced damage, in cooperation with DnaK, DnaJ and GrpE. Acts before DnaK, in the processing of protein aggregates. Protein binding stimulates the ATPase activity; ATP hydrolysis unfolds the denatured protein aggregates, which probably helps expose new hydrophobic binding sites on the surface of ClpB-bound aggregates, contributing to the solubilization and refolding of denatured protein aggregates by DnaK (By similarity).</text>
</comment>
<comment type="subunit">
    <text evidence="1">Homohexamer. The oligomerization is ATP-dependent (By similarity).</text>
</comment>
<comment type="subcellular location">
    <subcellularLocation>
        <location evidence="3">Cytoplasm</location>
    </subcellularLocation>
</comment>
<comment type="domain">
    <text evidence="1">The Clp repeat (R) domain probably functions as a substrate-discriminating domain, recruiting aggregated proteins to the ClpB hexamer and/or stabilizing bound proteins. The NBD2 domain is responsible for oligomerization, whereas the NBD1 domain stabilizes the hexamer probably in an ATP-dependent manner. The movement of the coiled-coil domain is essential for ClpB ability to rescue proteins from an aggregated state, probably by pulling apart large aggregated proteins, which are bound between the coiled-coils motifs of adjacent ClpB subunits in the functional hexamer (By similarity).</text>
</comment>
<comment type="similarity">
    <text evidence="3">Belongs to the ClpA/ClpB family.</text>
</comment>
<sequence>MDSFNPTTKMQVALTSALQAASSAGNPEIRPVHLLLAMLMQNDGIAAPLLETVGVEPDIVRNEAQRLLERLPQASGCSSQPQLSRESLAAITTAQQLATEMDDEYVSTEHLMLGLAMGDSDVAKLLTGHGASPQVLREAFVKIRGSARVTSSDPEFTYQALEKYSTDLTAQSGEGKLDPVIGRDNEIRRVVQVLSRRTKNNPVLIGEPGVGKTAIVEGLAQRIVAGDVPESLRDKTLVALDLGSMVAGAKYRGEFEQRLKVVLDDIKFSAGQIITFIDELHTIVGAGATGESAMDAGNMIKPMLARGELRLVGATTLDEYRRYIEKDAALERRFQQIFVGEPSVEDTVGILRGLKDRYEVHHGVRITDSALVAAAALSDRYITARFLPDKAIDLVDEAASRLRMEIDSRPVEIDEVERLVRRFEIEEMALVNEEDEASKERLETLRAELADQKERLAELTARWQNEKNAIDVVRELKEQLETLRGESERAERDGDLAKAAELRYGRIPEVEKKLEAAVPTAQAREDVMLKEEVGPDDIANVVSAWTGIPAGRLLEGETAKLLRMEDELGKRVVGQKKAVHAVSDAVRRSRAGVADPNRPTGSFLFLGPTGVGKTELAKALADFLFDDQRAMVRVDMSEYGEKHSVARLVGAPPGYIGHDQGGQLTEAVRRRPYTVVLFDEVEKAHSDVFDVLLQVLDEGRLTDGQGRTVDFRNTIPILTSNLGSGGSEEQVMAAVRSVFKPEFINRLDDVLIFDGLNPEELVRIVDIQLEQLGKRLAQRRLQLEVSLPAKRWLAQHGFDPVYGARPLRRLVQQAIGDQLAKMLLAGEVHDGDTLPVNVRPDGEALILG</sequence>
<evidence type="ECO:0000250" key="1"/>
<evidence type="ECO:0000255" key="2">
    <source>
        <dbReference type="PROSITE-ProRule" id="PRU01251"/>
    </source>
</evidence>
<evidence type="ECO:0000305" key="3"/>
<name>CLPB_MYCLE</name>
<organism>
    <name type="scientific">Mycobacterium leprae (strain TN)</name>
    <dbReference type="NCBI Taxonomy" id="272631"/>
    <lineage>
        <taxon>Bacteria</taxon>
        <taxon>Bacillati</taxon>
        <taxon>Actinomycetota</taxon>
        <taxon>Actinomycetes</taxon>
        <taxon>Mycobacteriales</taxon>
        <taxon>Mycobacteriaceae</taxon>
        <taxon>Mycobacterium</taxon>
    </lineage>
</organism>
<reference key="1">
    <citation type="journal article" date="2001" name="Nature">
        <title>Massive gene decay in the leprosy bacillus.</title>
        <authorList>
            <person name="Cole S.T."/>
            <person name="Eiglmeier K."/>
            <person name="Parkhill J."/>
            <person name="James K.D."/>
            <person name="Thomson N.R."/>
            <person name="Wheeler P.R."/>
            <person name="Honore N."/>
            <person name="Garnier T."/>
            <person name="Churcher C.M."/>
            <person name="Harris D.E."/>
            <person name="Mungall K.L."/>
            <person name="Basham D."/>
            <person name="Brown D."/>
            <person name="Chillingworth T."/>
            <person name="Connor R."/>
            <person name="Davies R.M."/>
            <person name="Devlin K."/>
            <person name="Duthoy S."/>
            <person name="Feltwell T."/>
            <person name="Fraser A."/>
            <person name="Hamlin N."/>
            <person name="Holroyd S."/>
            <person name="Hornsby T."/>
            <person name="Jagels K."/>
            <person name="Lacroix C."/>
            <person name="Maclean J."/>
            <person name="Moule S."/>
            <person name="Murphy L.D."/>
            <person name="Oliver K."/>
            <person name="Quail M.A."/>
            <person name="Rajandream M.A."/>
            <person name="Rutherford K.M."/>
            <person name="Rutter S."/>
            <person name="Seeger K."/>
            <person name="Simon S."/>
            <person name="Simmonds M."/>
            <person name="Skelton J."/>
            <person name="Squares R."/>
            <person name="Squares S."/>
            <person name="Stevens K."/>
            <person name="Taylor K."/>
            <person name="Whitehead S."/>
            <person name="Woodward J.R."/>
            <person name="Barrell B.G."/>
        </authorList>
    </citation>
    <scope>NUCLEOTIDE SEQUENCE [LARGE SCALE GENOMIC DNA]</scope>
    <source>
        <strain>TN</strain>
    </source>
</reference>
<gene>
    <name type="primary">clpB</name>
    <name type="ordered locus">ML2490</name>
</gene>
<accession>Q9CB26</accession>
<dbReference type="EMBL" id="AL583925">
    <property type="protein sequence ID" value="CAC32007.1"/>
    <property type="molecule type" value="Genomic_DNA"/>
</dbReference>
<dbReference type="PIR" id="G87220">
    <property type="entry name" value="G87220"/>
</dbReference>
<dbReference type="RefSeq" id="NP_302608.1">
    <property type="nucleotide sequence ID" value="NC_002677.1"/>
</dbReference>
<dbReference type="RefSeq" id="WP_010908927.1">
    <property type="nucleotide sequence ID" value="NC_002677.1"/>
</dbReference>
<dbReference type="SMR" id="Q9CB26"/>
<dbReference type="STRING" id="272631.gene:17576354"/>
<dbReference type="KEGG" id="mle:ML2490"/>
<dbReference type="PATRIC" id="fig|272631.5.peg.4782"/>
<dbReference type="Leproma" id="ML2490"/>
<dbReference type="eggNOG" id="COG0542">
    <property type="taxonomic scope" value="Bacteria"/>
</dbReference>
<dbReference type="HOGENOM" id="CLU_005070_4_0_11"/>
<dbReference type="OrthoDB" id="9803641at2"/>
<dbReference type="Proteomes" id="UP000000806">
    <property type="component" value="Chromosome"/>
</dbReference>
<dbReference type="GO" id="GO:0005737">
    <property type="term" value="C:cytoplasm"/>
    <property type="evidence" value="ECO:0007669"/>
    <property type="project" value="UniProtKB-SubCell"/>
</dbReference>
<dbReference type="GO" id="GO:0005524">
    <property type="term" value="F:ATP binding"/>
    <property type="evidence" value="ECO:0007669"/>
    <property type="project" value="UniProtKB-KW"/>
</dbReference>
<dbReference type="GO" id="GO:0016887">
    <property type="term" value="F:ATP hydrolysis activity"/>
    <property type="evidence" value="ECO:0007669"/>
    <property type="project" value="InterPro"/>
</dbReference>
<dbReference type="GO" id="GO:0034605">
    <property type="term" value="P:cellular response to heat"/>
    <property type="evidence" value="ECO:0007669"/>
    <property type="project" value="TreeGrafter"/>
</dbReference>
<dbReference type="GO" id="GO:0042026">
    <property type="term" value="P:protein refolding"/>
    <property type="evidence" value="ECO:0007669"/>
    <property type="project" value="InterPro"/>
</dbReference>
<dbReference type="CDD" id="cd00009">
    <property type="entry name" value="AAA"/>
    <property type="match status" value="1"/>
</dbReference>
<dbReference type="CDD" id="cd19499">
    <property type="entry name" value="RecA-like_ClpB_Hsp104-like"/>
    <property type="match status" value="1"/>
</dbReference>
<dbReference type="FunFam" id="1.10.8.60:FF:000017">
    <property type="entry name" value="ATP-dependent chaperone ClpB"/>
    <property type="match status" value="1"/>
</dbReference>
<dbReference type="FunFam" id="3.40.50.300:FF:000120">
    <property type="entry name" value="ATP-dependent chaperone ClpB"/>
    <property type="match status" value="1"/>
</dbReference>
<dbReference type="FunFam" id="3.40.50.300:FF:000025">
    <property type="entry name" value="ATP-dependent Clp protease subunit"/>
    <property type="match status" value="1"/>
</dbReference>
<dbReference type="FunFam" id="3.40.50.300:FF:000010">
    <property type="entry name" value="Chaperone clpB 1, putative"/>
    <property type="match status" value="1"/>
</dbReference>
<dbReference type="Gene3D" id="1.10.8.60">
    <property type="match status" value="1"/>
</dbReference>
<dbReference type="Gene3D" id="1.10.1780.10">
    <property type="entry name" value="Clp, N-terminal domain"/>
    <property type="match status" value="1"/>
</dbReference>
<dbReference type="Gene3D" id="3.40.50.300">
    <property type="entry name" value="P-loop containing nucleotide triphosphate hydrolases"/>
    <property type="match status" value="3"/>
</dbReference>
<dbReference type="InterPro" id="IPR003593">
    <property type="entry name" value="AAA+_ATPase"/>
</dbReference>
<dbReference type="InterPro" id="IPR003959">
    <property type="entry name" value="ATPase_AAA_core"/>
</dbReference>
<dbReference type="InterPro" id="IPR017730">
    <property type="entry name" value="Chaperonin_ClpB"/>
</dbReference>
<dbReference type="InterPro" id="IPR019489">
    <property type="entry name" value="Clp_ATPase_C"/>
</dbReference>
<dbReference type="InterPro" id="IPR036628">
    <property type="entry name" value="Clp_N_dom_sf"/>
</dbReference>
<dbReference type="InterPro" id="IPR004176">
    <property type="entry name" value="Clp_R_dom"/>
</dbReference>
<dbReference type="InterPro" id="IPR001270">
    <property type="entry name" value="ClpA/B"/>
</dbReference>
<dbReference type="InterPro" id="IPR018368">
    <property type="entry name" value="ClpA/B_CS1"/>
</dbReference>
<dbReference type="InterPro" id="IPR028299">
    <property type="entry name" value="ClpA/B_CS2"/>
</dbReference>
<dbReference type="InterPro" id="IPR041546">
    <property type="entry name" value="ClpA/ClpB_AAA_lid"/>
</dbReference>
<dbReference type="InterPro" id="IPR050130">
    <property type="entry name" value="ClpA_ClpB"/>
</dbReference>
<dbReference type="InterPro" id="IPR027417">
    <property type="entry name" value="P-loop_NTPase"/>
</dbReference>
<dbReference type="NCBIfam" id="TIGR03346">
    <property type="entry name" value="chaperone_ClpB"/>
    <property type="match status" value="1"/>
</dbReference>
<dbReference type="PANTHER" id="PTHR11638">
    <property type="entry name" value="ATP-DEPENDENT CLP PROTEASE"/>
    <property type="match status" value="1"/>
</dbReference>
<dbReference type="PANTHER" id="PTHR11638:SF18">
    <property type="entry name" value="HEAT SHOCK PROTEIN 104"/>
    <property type="match status" value="1"/>
</dbReference>
<dbReference type="Pfam" id="PF00004">
    <property type="entry name" value="AAA"/>
    <property type="match status" value="1"/>
</dbReference>
<dbReference type="Pfam" id="PF07724">
    <property type="entry name" value="AAA_2"/>
    <property type="match status" value="1"/>
</dbReference>
<dbReference type="Pfam" id="PF17871">
    <property type="entry name" value="AAA_lid_9"/>
    <property type="match status" value="1"/>
</dbReference>
<dbReference type="Pfam" id="PF02861">
    <property type="entry name" value="Clp_N"/>
    <property type="match status" value="2"/>
</dbReference>
<dbReference type="Pfam" id="PF10431">
    <property type="entry name" value="ClpB_D2-small"/>
    <property type="match status" value="1"/>
</dbReference>
<dbReference type="PRINTS" id="PR00300">
    <property type="entry name" value="CLPPROTEASEA"/>
</dbReference>
<dbReference type="SMART" id="SM00382">
    <property type="entry name" value="AAA"/>
    <property type="match status" value="2"/>
</dbReference>
<dbReference type="SMART" id="SM01086">
    <property type="entry name" value="ClpB_D2-small"/>
    <property type="match status" value="1"/>
</dbReference>
<dbReference type="SUPFAM" id="SSF81923">
    <property type="entry name" value="Double Clp-N motif"/>
    <property type="match status" value="1"/>
</dbReference>
<dbReference type="SUPFAM" id="SSF52540">
    <property type="entry name" value="P-loop containing nucleoside triphosphate hydrolases"/>
    <property type="match status" value="2"/>
</dbReference>
<dbReference type="PROSITE" id="PS51903">
    <property type="entry name" value="CLP_R"/>
    <property type="match status" value="1"/>
</dbReference>
<dbReference type="PROSITE" id="PS00870">
    <property type="entry name" value="CLPAB_1"/>
    <property type="match status" value="1"/>
</dbReference>
<dbReference type="PROSITE" id="PS00871">
    <property type="entry name" value="CLPAB_2"/>
    <property type="match status" value="1"/>
</dbReference>
<feature type="chain" id="PRO_0000191142" description="Chaperone protein ClpB">
    <location>
        <begin position="1"/>
        <end position="848"/>
    </location>
</feature>
<feature type="domain" description="Clp R" evidence="2">
    <location>
        <begin position="1"/>
        <end position="146"/>
    </location>
</feature>
<feature type="region of interest" description="Repeat 1" evidence="2">
    <location>
        <begin position="6"/>
        <end position="71"/>
    </location>
</feature>
<feature type="region of interest" description="Repeat 2" evidence="2">
    <location>
        <begin position="83"/>
        <end position="146"/>
    </location>
</feature>
<feature type="region of interest" description="NBD1" evidence="1">
    <location>
        <begin position="159"/>
        <end position="341"/>
    </location>
</feature>
<feature type="region of interest" description="Linker" evidence="1">
    <location>
        <begin position="342"/>
        <end position="547"/>
    </location>
</feature>
<feature type="region of interest" description="NBD2" evidence="1">
    <location>
        <begin position="557"/>
        <end position="755"/>
    </location>
</feature>
<feature type="region of interest" description="C-terminal" evidence="1">
    <location>
        <begin position="756"/>
        <end position="848"/>
    </location>
</feature>
<feature type="coiled-coil region" evidence="1">
    <location>
        <begin position="392"/>
        <end position="524"/>
    </location>
</feature>
<feature type="binding site" evidence="1">
    <location>
        <begin position="206"/>
        <end position="213"/>
    </location>
    <ligand>
        <name>ATP</name>
        <dbReference type="ChEBI" id="CHEBI:30616"/>
        <label>1</label>
    </ligand>
</feature>
<feature type="binding site" evidence="1">
    <location>
        <begin position="607"/>
        <end position="614"/>
    </location>
    <ligand>
        <name>ATP</name>
        <dbReference type="ChEBI" id="CHEBI:30616"/>
        <label>2</label>
    </ligand>
</feature>
<proteinExistence type="inferred from homology"/>
<protein>
    <recommendedName>
        <fullName>Chaperone protein ClpB</fullName>
    </recommendedName>
</protein>
<keyword id="KW-0067">ATP-binding</keyword>
<keyword id="KW-0143">Chaperone</keyword>
<keyword id="KW-0175">Coiled coil</keyword>
<keyword id="KW-0963">Cytoplasm</keyword>
<keyword id="KW-0547">Nucleotide-binding</keyword>
<keyword id="KW-1185">Reference proteome</keyword>
<keyword id="KW-0677">Repeat</keyword>
<keyword id="KW-0346">Stress response</keyword>